<gene>
    <name type="primary">GDAP2</name>
</gene>
<protein>
    <recommendedName>
        <fullName>Ganglioside-induced differentiation-associated protein 2</fullName>
    </recommendedName>
</protein>
<dbReference type="EMBL" id="AK000149">
    <property type="protein sequence ID" value="BAA90976.1"/>
    <property type="molecule type" value="mRNA"/>
</dbReference>
<dbReference type="EMBL" id="AL122007">
    <property type="status" value="NOT_ANNOTATED_CDS"/>
    <property type="molecule type" value="Genomic_DNA"/>
</dbReference>
<dbReference type="EMBL" id="AL121993">
    <property type="status" value="NOT_ANNOTATED_CDS"/>
    <property type="molecule type" value="Genomic_DNA"/>
</dbReference>
<dbReference type="EMBL" id="CH471122">
    <property type="protein sequence ID" value="EAW56682.1"/>
    <property type="molecule type" value="Genomic_DNA"/>
</dbReference>
<dbReference type="EMBL" id="CH471122">
    <property type="protein sequence ID" value="EAW56683.1"/>
    <property type="molecule type" value="Genomic_DNA"/>
</dbReference>
<dbReference type="EMBL" id="BC013132">
    <property type="protein sequence ID" value="AAH13132.1"/>
    <property type="molecule type" value="mRNA"/>
</dbReference>
<dbReference type="CCDS" id="CCDS44201.1">
    <molecule id="Q9NXN4-2"/>
</dbReference>
<dbReference type="CCDS" id="CCDS897.1">
    <molecule id="Q9NXN4-1"/>
</dbReference>
<dbReference type="RefSeq" id="NP_001129061.1">
    <molecule id="Q9NXN4-2"/>
    <property type="nucleotide sequence ID" value="NM_001135589.3"/>
</dbReference>
<dbReference type="RefSeq" id="NP_060156.1">
    <molecule id="Q9NXN4-1"/>
    <property type="nucleotide sequence ID" value="NM_017686.4"/>
</dbReference>
<dbReference type="PDB" id="4UML">
    <property type="method" value="X-ray"/>
    <property type="resolution" value="1.90 A"/>
    <property type="chains" value="A=1-228"/>
</dbReference>
<dbReference type="PDBsum" id="4UML"/>
<dbReference type="SMR" id="Q9NXN4"/>
<dbReference type="BioGRID" id="120187">
    <property type="interactions" value="19"/>
</dbReference>
<dbReference type="FunCoup" id="Q9NXN4">
    <property type="interactions" value="1188"/>
</dbReference>
<dbReference type="IntAct" id="Q9NXN4">
    <property type="interactions" value="11"/>
</dbReference>
<dbReference type="MINT" id="Q9NXN4"/>
<dbReference type="STRING" id="9606.ENSP00000358451"/>
<dbReference type="iPTMnet" id="Q9NXN4"/>
<dbReference type="PhosphoSitePlus" id="Q9NXN4"/>
<dbReference type="BioMuta" id="GDAP2"/>
<dbReference type="DMDM" id="74753050"/>
<dbReference type="jPOST" id="Q9NXN4"/>
<dbReference type="MassIVE" id="Q9NXN4"/>
<dbReference type="PaxDb" id="9606-ENSP00000358451"/>
<dbReference type="PeptideAtlas" id="Q9NXN4"/>
<dbReference type="ProteomicsDB" id="83115">
    <molecule id="Q9NXN4-1"/>
</dbReference>
<dbReference type="ProteomicsDB" id="83116">
    <molecule id="Q9NXN4-2"/>
</dbReference>
<dbReference type="Pumba" id="Q9NXN4"/>
<dbReference type="Antibodypedia" id="46950">
    <property type="antibodies" value="110 antibodies from 20 providers"/>
</dbReference>
<dbReference type="DNASU" id="54834"/>
<dbReference type="Ensembl" id="ENST00000369442.3">
    <molecule id="Q9NXN4-2"/>
    <property type="protein sequence ID" value="ENSP00000358450.3"/>
    <property type="gene ID" value="ENSG00000196505.11"/>
</dbReference>
<dbReference type="Ensembl" id="ENST00000369443.10">
    <molecule id="Q9NXN4-1"/>
    <property type="protein sequence ID" value="ENSP00000358451.4"/>
    <property type="gene ID" value="ENSG00000196505.11"/>
</dbReference>
<dbReference type="GeneID" id="54834"/>
<dbReference type="KEGG" id="hsa:54834"/>
<dbReference type="MANE-Select" id="ENST00000369443.10">
    <property type="protein sequence ID" value="ENSP00000358451.4"/>
    <property type="RefSeq nucleotide sequence ID" value="NM_017686.4"/>
    <property type="RefSeq protein sequence ID" value="NP_060156.1"/>
</dbReference>
<dbReference type="UCSC" id="uc001ehf.4">
    <molecule id="Q9NXN4-1"/>
    <property type="organism name" value="human"/>
</dbReference>
<dbReference type="AGR" id="HGNC:18010"/>
<dbReference type="CTD" id="54834"/>
<dbReference type="DisGeNET" id="54834"/>
<dbReference type="GeneCards" id="GDAP2"/>
<dbReference type="HGNC" id="HGNC:18010">
    <property type="gene designation" value="GDAP2"/>
</dbReference>
<dbReference type="HPA" id="ENSG00000196505">
    <property type="expression patterns" value="Low tissue specificity"/>
</dbReference>
<dbReference type="MalaCards" id="GDAP2"/>
<dbReference type="MIM" id="618128">
    <property type="type" value="gene"/>
</dbReference>
<dbReference type="MIM" id="618369">
    <property type="type" value="phenotype"/>
</dbReference>
<dbReference type="neXtProt" id="NX_Q9NXN4"/>
<dbReference type="OpenTargets" id="ENSG00000196505"/>
<dbReference type="PharmGKB" id="PA28628"/>
<dbReference type="VEuPathDB" id="HostDB:ENSG00000196505"/>
<dbReference type="eggNOG" id="KOG2633">
    <property type="taxonomic scope" value="Eukaryota"/>
</dbReference>
<dbReference type="GeneTree" id="ENSGT00940000156336"/>
<dbReference type="HOGENOM" id="CLU_026877_0_0_1"/>
<dbReference type="InParanoid" id="Q9NXN4"/>
<dbReference type="OMA" id="IHPTFWT"/>
<dbReference type="OrthoDB" id="365077at2759"/>
<dbReference type="PAN-GO" id="Q9NXN4">
    <property type="GO annotations" value="0 GO annotations based on evolutionary models"/>
</dbReference>
<dbReference type="PhylomeDB" id="Q9NXN4"/>
<dbReference type="TreeFam" id="TF324164"/>
<dbReference type="PathwayCommons" id="Q9NXN4"/>
<dbReference type="SignaLink" id="Q9NXN4"/>
<dbReference type="BioGRID-ORCS" id="54834">
    <property type="hits" value="16 hits in 1152 CRISPR screens"/>
</dbReference>
<dbReference type="ChiTaRS" id="GDAP2">
    <property type="organism name" value="human"/>
</dbReference>
<dbReference type="EvolutionaryTrace" id="Q9NXN4"/>
<dbReference type="GenomeRNAi" id="54834"/>
<dbReference type="Pharos" id="Q9NXN4">
    <property type="development level" value="Tbio"/>
</dbReference>
<dbReference type="PRO" id="PR:Q9NXN4"/>
<dbReference type="Proteomes" id="UP000005640">
    <property type="component" value="Chromosome 1"/>
</dbReference>
<dbReference type="RNAct" id="Q9NXN4">
    <property type="molecule type" value="protein"/>
</dbReference>
<dbReference type="Bgee" id="ENSG00000196505">
    <property type="expression patterns" value="Expressed in caput epididymis and 157 other cell types or tissues"/>
</dbReference>
<dbReference type="GO" id="GO:0005765">
    <property type="term" value="C:lysosomal membrane"/>
    <property type="evidence" value="ECO:0007005"/>
    <property type="project" value="UniProtKB"/>
</dbReference>
<dbReference type="GO" id="GO:0032526">
    <property type="term" value="P:response to retinoic acid"/>
    <property type="evidence" value="ECO:0007669"/>
    <property type="project" value="Ensembl"/>
</dbReference>
<dbReference type="CDD" id="cd02905">
    <property type="entry name" value="Macro_GDAP2-like"/>
    <property type="match status" value="1"/>
</dbReference>
<dbReference type="CDD" id="cd00170">
    <property type="entry name" value="SEC14"/>
    <property type="match status" value="1"/>
</dbReference>
<dbReference type="FunFam" id="3.40.525.10:FF:000014">
    <property type="entry name" value="Ganglioside-induced differentiation-associated protein 2"/>
    <property type="match status" value="1"/>
</dbReference>
<dbReference type="FunFam" id="3.40.220.10:FF:000006">
    <property type="entry name" value="ganglioside-induced differentiation-associated protein 2 isoform X1"/>
    <property type="match status" value="1"/>
</dbReference>
<dbReference type="Gene3D" id="3.40.525.10">
    <property type="entry name" value="CRAL-TRIO lipid binding domain"/>
    <property type="match status" value="1"/>
</dbReference>
<dbReference type="Gene3D" id="3.40.220.10">
    <property type="entry name" value="Leucine Aminopeptidase, subunit E, domain 1"/>
    <property type="match status" value="1"/>
</dbReference>
<dbReference type="InterPro" id="IPR001251">
    <property type="entry name" value="CRAL-TRIO_dom"/>
</dbReference>
<dbReference type="InterPro" id="IPR036865">
    <property type="entry name" value="CRAL-TRIO_dom_sf"/>
</dbReference>
<dbReference type="InterPro" id="IPR002589">
    <property type="entry name" value="Macro_dom"/>
</dbReference>
<dbReference type="InterPro" id="IPR043472">
    <property type="entry name" value="Macro_dom-like"/>
</dbReference>
<dbReference type="InterPro" id="IPR035793">
    <property type="entry name" value="Macro_GDAP2"/>
</dbReference>
<dbReference type="PANTHER" id="PTHR11106">
    <property type="entry name" value="GANGLIOSIDE INDUCED DIFFERENTIATION ASSOCIATED PROTEIN 2-RELATED"/>
    <property type="match status" value="1"/>
</dbReference>
<dbReference type="PANTHER" id="PTHR11106:SF72">
    <property type="entry name" value="GANGLIOSIDE-INDUCED DIFFERENTIATION-ASSOCIATED PROTEIN 2"/>
    <property type="match status" value="1"/>
</dbReference>
<dbReference type="Pfam" id="PF13716">
    <property type="entry name" value="CRAL_TRIO_2"/>
    <property type="match status" value="1"/>
</dbReference>
<dbReference type="Pfam" id="PF01661">
    <property type="entry name" value="Macro"/>
    <property type="match status" value="1"/>
</dbReference>
<dbReference type="SMART" id="SM00506">
    <property type="entry name" value="A1pp"/>
    <property type="match status" value="1"/>
</dbReference>
<dbReference type="SMART" id="SM00516">
    <property type="entry name" value="SEC14"/>
    <property type="match status" value="1"/>
</dbReference>
<dbReference type="SUPFAM" id="SSF52087">
    <property type="entry name" value="CRAL/TRIO domain"/>
    <property type="match status" value="1"/>
</dbReference>
<dbReference type="SUPFAM" id="SSF52949">
    <property type="entry name" value="Macro domain-like"/>
    <property type="match status" value="1"/>
</dbReference>
<dbReference type="PROSITE" id="PS51154">
    <property type="entry name" value="MACRO"/>
    <property type="match status" value="1"/>
</dbReference>
<feature type="chain" id="PRO_0000331394" description="Ganglioside-induced differentiation-associated protein 2">
    <location>
        <begin position="1"/>
        <end position="497"/>
    </location>
</feature>
<feature type="domain" description="Macro" evidence="1">
    <location>
        <begin position="43"/>
        <end position="223"/>
    </location>
</feature>
<feature type="domain" description="CRAL-TRIO">
    <location>
        <begin position="333"/>
        <end position="481"/>
    </location>
</feature>
<feature type="region of interest" description="Disordered" evidence="2">
    <location>
        <begin position="252"/>
        <end position="273"/>
    </location>
</feature>
<feature type="compositionally biased region" description="Basic and acidic residues" evidence="2">
    <location>
        <begin position="253"/>
        <end position="263"/>
    </location>
</feature>
<feature type="modified residue" description="Phosphoserine" evidence="6">
    <location>
        <position position="280"/>
    </location>
</feature>
<feature type="splice variant" id="VSP_033186" description="In isoform 2." evidence="4">
    <original>ENGPYYTSYPPSPDL</original>
    <variation>VRSTRSSPSPGMVY</variation>
    <location>
        <begin position="483"/>
        <end position="497"/>
    </location>
</feature>
<feature type="sequence variant" id="VAR_042843" description="In dbSNP:rs12752437.">
    <original>P</original>
    <variation>R</variation>
    <location>
        <position position="95"/>
    </location>
</feature>
<feature type="sequence variant" id="VAR_042844" description="In dbSNP:rs12753610.">
    <original>G</original>
    <variation>S</variation>
    <location>
        <position position="106"/>
    </location>
</feature>
<feature type="sequence variant" id="VAR_042845" description="In dbSNP:rs12145577.">
    <original>Q</original>
    <variation>P</variation>
    <location>
        <position position="312"/>
    </location>
</feature>
<feature type="sequence variant" id="VAR_082087" description="In SCAR27." evidence="3">
    <location>
        <begin position="316"/>
        <end position="497"/>
    </location>
</feature>
<feature type="sequence variant" id="VAR_042846" description="In dbSNP:rs34924570.">
    <original>T</original>
    <variation>A</variation>
    <location>
        <position position="489"/>
    </location>
</feature>
<feature type="strand" evidence="7">
    <location>
        <begin position="9"/>
        <end position="11"/>
    </location>
</feature>
<feature type="helix" evidence="7">
    <location>
        <begin position="13"/>
        <end position="15"/>
    </location>
</feature>
<feature type="turn" evidence="7">
    <location>
        <begin position="19"/>
        <end position="21"/>
    </location>
</feature>
<feature type="helix" evidence="7">
    <location>
        <begin position="50"/>
        <end position="53"/>
    </location>
</feature>
<feature type="strand" evidence="7">
    <location>
        <begin position="56"/>
        <end position="61"/>
    </location>
</feature>
<feature type="helix" evidence="7">
    <location>
        <begin position="63"/>
        <end position="65"/>
    </location>
</feature>
<feature type="strand" evidence="7">
    <location>
        <begin position="68"/>
        <end position="74"/>
    </location>
</feature>
<feature type="helix" evidence="7">
    <location>
        <begin position="84"/>
        <end position="93"/>
    </location>
</feature>
<feature type="helix" evidence="7">
    <location>
        <begin position="97"/>
        <end position="104"/>
    </location>
</feature>
<feature type="strand" evidence="7">
    <location>
        <begin position="112"/>
        <end position="116"/>
    </location>
</feature>
<feature type="strand" evidence="7">
    <location>
        <begin position="120"/>
        <end position="128"/>
    </location>
</feature>
<feature type="helix" evidence="7">
    <location>
        <begin position="135"/>
        <end position="137"/>
    </location>
</feature>
<feature type="helix" evidence="7">
    <location>
        <begin position="138"/>
        <end position="158"/>
    </location>
</feature>
<feature type="strand" evidence="7">
    <location>
        <begin position="162"/>
        <end position="166"/>
    </location>
</feature>
<feature type="helix" evidence="7">
    <location>
        <begin position="172"/>
        <end position="174"/>
    </location>
</feature>
<feature type="helix" evidence="7">
    <location>
        <begin position="178"/>
        <end position="196"/>
    </location>
</feature>
<feature type="helix" evidence="7">
    <location>
        <begin position="197"/>
        <end position="199"/>
    </location>
</feature>
<feature type="strand" evidence="7">
    <location>
        <begin position="202"/>
        <end position="207"/>
    </location>
</feature>
<feature type="helix" evidence="7">
    <location>
        <begin position="209"/>
        <end position="222"/>
    </location>
</feature>
<proteinExistence type="evidence at protein level"/>
<reference key="1">
    <citation type="journal article" date="2004" name="Nat. Genet.">
        <title>Complete sequencing and characterization of 21,243 full-length human cDNAs.</title>
        <authorList>
            <person name="Ota T."/>
            <person name="Suzuki Y."/>
            <person name="Nishikawa T."/>
            <person name="Otsuki T."/>
            <person name="Sugiyama T."/>
            <person name="Irie R."/>
            <person name="Wakamatsu A."/>
            <person name="Hayashi K."/>
            <person name="Sato H."/>
            <person name="Nagai K."/>
            <person name="Kimura K."/>
            <person name="Makita H."/>
            <person name="Sekine M."/>
            <person name="Obayashi M."/>
            <person name="Nishi T."/>
            <person name="Shibahara T."/>
            <person name="Tanaka T."/>
            <person name="Ishii S."/>
            <person name="Yamamoto J."/>
            <person name="Saito K."/>
            <person name="Kawai Y."/>
            <person name="Isono Y."/>
            <person name="Nakamura Y."/>
            <person name="Nagahari K."/>
            <person name="Murakami K."/>
            <person name="Yasuda T."/>
            <person name="Iwayanagi T."/>
            <person name="Wagatsuma M."/>
            <person name="Shiratori A."/>
            <person name="Sudo H."/>
            <person name="Hosoiri T."/>
            <person name="Kaku Y."/>
            <person name="Kodaira H."/>
            <person name="Kondo H."/>
            <person name="Sugawara M."/>
            <person name="Takahashi M."/>
            <person name="Kanda K."/>
            <person name="Yokoi T."/>
            <person name="Furuya T."/>
            <person name="Kikkawa E."/>
            <person name="Omura Y."/>
            <person name="Abe K."/>
            <person name="Kamihara K."/>
            <person name="Katsuta N."/>
            <person name="Sato K."/>
            <person name="Tanikawa M."/>
            <person name="Yamazaki M."/>
            <person name="Ninomiya K."/>
            <person name="Ishibashi T."/>
            <person name="Yamashita H."/>
            <person name="Murakawa K."/>
            <person name="Fujimori K."/>
            <person name="Tanai H."/>
            <person name="Kimata M."/>
            <person name="Watanabe M."/>
            <person name="Hiraoka S."/>
            <person name="Chiba Y."/>
            <person name="Ishida S."/>
            <person name="Ono Y."/>
            <person name="Takiguchi S."/>
            <person name="Watanabe S."/>
            <person name="Yosida M."/>
            <person name="Hotuta T."/>
            <person name="Kusano J."/>
            <person name="Kanehori K."/>
            <person name="Takahashi-Fujii A."/>
            <person name="Hara H."/>
            <person name="Tanase T.-O."/>
            <person name="Nomura Y."/>
            <person name="Togiya S."/>
            <person name="Komai F."/>
            <person name="Hara R."/>
            <person name="Takeuchi K."/>
            <person name="Arita M."/>
            <person name="Imose N."/>
            <person name="Musashino K."/>
            <person name="Yuuki H."/>
            <person name="Oshima A."/>
            <person name="Sasaki N."/>
            <person name="Aotsuka S."/>
            <person name="Yoshikawa Y."/>
            <person name="Matsunawa H."/>
            <person name="Ichihara T."/>
            <person name="Shiohata N."/>
            <person name="Sano S."/>
            <person name="Moriya S."/>
            <person name="Momiyama H."/>
            <person name="Satoh N."/>
            <person name="Takami S."/>
            <person name="Terashima Y."/>
            <person name="Suzuki O."/>
            <person name="Nakagawa S."/>
            <person name="Senoh A."/>
            <person name="Mizoguchi H."/>
            <person name="Goto Y."/>
            <person name="Shimizu F."/>
            <person name="Wakebe H."/>
            <person name="Hishigaki H."/>
            <person name="Watanabe T."/>
            <person name="Sugiyama A."/>
            <person name="Takemoto M."/>
            <person name="Kawakami B."/>
            <person name="Yamazaki M."/>
            <person name="Watanabe K."/>
            <person name="Kumagai A."/>
            <person name="Itakura S."/>
            <person name="Fukuzumi Y."/>
            <person name="Fujimori Y."/>
            <person name="Komiyama M."/>
            <person name="Tashiro H."/>
            <person name="Tanigami A."/>
            <person name="Fujiwara T."/>
            <person name="Ono T."/>
            <person name="Yamada K."/>
            <person name="Fujii Y."/>
            <person name="Ozaki K."/>
            <person name="Hirao M."/>
            <person name="Ohmori Y."/>
            <person name="Kawabata A."/>
            <person name="Hikiji T."/>
            <person name="Kobatake N."/>
            <person name="Inagaki H."/>
            <person name="Ikema Y."/>
            <person name="Okamoto S."/>
            <person name="Okitani R."/>
            <person name="Kawakami T."/>
            <person name="Noguchi S."/>
            <person name="Itoh T."/>
            <person name="Shigeta K."/>
            <person name="Senba T."/>
            <person name="Matsumura K."/>
            <person name="Nakajima Y."/>
            <person name="Mizuno T."/>
            <person name="Morinaga M."/>
            <person name="Sasaki M."/>
            <person name="Togashi T."/>
            <person name="Oyama M."/>
            <person name="Hata H."/>
            <person name="Watanabe M."/>
            <person name="Komatsu T."/>
            <person name="Mizushima-Sugano J."/>
            <person name="Satoh T."/>
            <person name="Shirai Y."/>
            <person name="Takahashi Y."/>
            <person name="Nakagawa K."/>
            <person name="Okumura K."/>
            <person name="Nagase T."/>
            <person name="Nomura N."/>
            <person name="Kikuchi H."/>
            <person name="Masuho Y."/>
            <person name="Yamashita R."/>
            <person name="Nakai K."/>
            <person name="Yada T."/>
            <person name="Nakamura Y."/>
            <person name="Ohara O."/>
            <person name="Isogai T."/>
            <person name="Sugano S."/>
        </authorList>
    </citation>
    <scope>NUCLEOTIDE SEQUENCE [LARGE SCALE MRNA] (ISOFORM 1)</scope>
    <source>
        <tissue>Colon</tissue>
    </source>
</reference>
<reference key="2">
    <citation type="journal article" date="2006" name="Nature">
        <title>The DNA sequence and biological annotation of human chromosome 1.</title>
        <authorList>
            <person name="Gregory S.G."/>
            <person name="Barlow K.F."/>
            <person name="McLay K.E."/>
            <person name="Kaul R."/>
            <person name="Swarbreck D."/>
            <person name="Dunham A."/>
            <person name="Scott C.E."/>
            <person name="Howe K.L."/>
            <person name="Woodfine K."/>
            <person name="Spencer C.C.A."/>
            <person name="Jones M.C."/>
            <person name="Gillson C."/>
            <person name="Searle S."/>
            <person name="Zhou Y."/>
            <person name="Kokocinski F."/>
            <person name="McDonald L."/>
            <person name="Evans R."/>
            <person name="Phillips K."/>
            <person name="Atkinson A."/>
            <person name="Cooper R."/>
            <person name="Jones C."/>
            <person name="Hall R.E."/>
            <person name="Andrews T.D."/>
            <person name="Lloyd C."/>
            <person name="Ainscough R."/>
            <person name="Almeida J.P."/>
            <person name="Ambrose K.D."/>
            <person name="Anderson F."/>
            <person name="Andrew R.W."/>
            <person name="Ashwell R.I.S."/>
            <person name="Aubin K."/>
            <person name="Babbage A.K."/>
            <person name="Bagguley C.L."/>
            <person name="Bailey J."/>
            <person name="Beasley H."/>
            <person name="Bethel G."/>
            <person name="Bird C.P."/>
            <person name="Bray-Allen S."/>
            <person name="Brown J.Y."/>
            <person name="Brown A.J."/>
            <person name="Buckley D."/>
            <person name="Burton J."/>
            <person name="Bye J."/>
            <person name="Carder C."/>
            <person name="Chapman J.C."/>
            <person name="Clark S.Y."/>
            <person name="Clarke G."/>
            <person name="Clee C."/>
            <person name="Cobley V."/>
            <person name="Collier R.E."/>
            <person name="Corby N."/>
            <person name="Coville G.J."/>
            <person name="Davies J."/>
            <person name="Deadman R."/>
            <person name="Dunn M."/>
            <person name="Earthrowl M."/>
            <person name="Ellington A.G."/>
            <person name="Errington H."/>
            <person name="Frankish A."/>
            <person name="Frankland J."/>
            <person name="French L."/>
            <person name="Garner P."/>
            <person name="Garnett J."/>
            <person name="Gay L."/>
            <person name="Ghori M.R.J."/>
            <person name="Gibson R."/>
            <person name="Gilby L.M."/>
            <person name="Gillett W."/>
            <person name="Glithero R.J."/>
            <person name="Grafham D.V."/>
            <person name="Griffiths C."/>
            <person name="Griffiths-Jones S."/>
            <person name="Grocock R."/>
            <person name="Hammond S."/>
            <person name="Harrison E.S.I."/>
            <person name="Hart E."/>
            <person name="Haugen E."/>
            <person name="Heath P.D."/>
            <person name="Holmes S."/>
            <person name="Holt K."/>
            <person name="Howden P.J."/>
            <person name="Hunt A.R."/>
            <person name="Hunt S.E."/>
            <person name="Hunter G."/>
            <person name="Isherwood J."/>
            <person name="James R."/>
            <person name="Johnson C."/>
            <person name="Johnson D."/>
            <person name="Joy A."/>
            <person name="Kay M."/>
            <person name="Kershaw J.K."/>
            <person name="Kibukawa M."/>
            <person name="Kimberley A.M."/>
            <person name="King A."/>
            <person name="Knights A.J."/>
            <person name="Lad H."/>
            <person name="Laird G."/>
            <person name="Lawlor S."/>
            <person name="Leongamornlert D.A."/>
            <person name="Lloyd D.M."/>
            <person name="Loveland J."/>
            <person name="Lovell J."/>
            <person name="Lush M.J."/>
            <person name="Lyne R."/>
            <person name="Martin S."/>
            <person name="Mashreghi-Mohammadi M."/>
            <person name="Matthews L."/>
            <person name="Matthews N.S.W."/>
            <person name="McLaren S."/>
            <person name="Milne S."/>
            <person name="Mistry S."/>
            <person name="Moore M.J.F."/>
            <person name="Nickerson T."/>
            <person name="O'Dell C.N."/>
            <person name="Oliver K."/>
            <person name="Palmeiri A."/>
            <person name="Palmer S.A."/>
            <person name="Parker A."/>
            <person name="Patel D."/>
            <person name="Pearce A.V."/>
            <person name="Peck A.I."/>
            <person name="Pelan S."/>
            <person name="Phelps K."/>
            <person name="Phillimore B.J."/>
            <person name="Plumb R."/>
            <person name="Rajan J."/>
            <person name="Raymond C."/>
            <person name="Rouse G."/>
            <person name="Saenphimmachak C."/>
            <person name="Sehra H.K."/>
            <person name="Sheridan E."/>
            <person name="Shownkeen R."/>
            <person name="Sims S."/>
            <person name="Skuce C.D."/>
            <person name="Smith M."/>
            <person name="Steward C."/>
            <person name="Subramanian S."/>
            <person name="Sycamore N."/>
            <person name="Tracey A."/>
            <person name="Tromans A."/>
            <person name="Van Helmond Z."/>
            <person name="Wall M."/>
            <person name="Wallis J.M."/>
            <person name="White S."/>
            <person name="Whitehead S.L."/>
            <person name="Wilkinson J.E."/>
            <person name="Willey D.L."/>
            <person name="Williams H."/>
            <person name="Wilming L."/>
            <person name="Wray P.W."/>
            <person name="Wu Z."/>
            <person name="Coulson A."/>
            <person name="Vaudin M."/>
            <person name="Sulston J.E."/>
            <person name="Durbin R.M."/>
            <person name="Hubbard T."/>
            <person name="Wooster R."/>
            <person name="Dunham I."/>
            <person name="Carter N.P."/>
            <person name="McVean G."/>
            <person name="Ross M.T."/>
            <person name="Harrow J."/>
            <person name="Olson M.V."/>
            <person name="Beck S."/>
            <person name="Rogers J."/>
            <person name="Bentley D.R."/>
        </authorList>
    </citation>
    <scope>NUCLEOTIDE SEQUENCE [LARGE SCALE GENOMIC DNA]</scope>
</reference>
<reference key="3">
    <citation type="submission" date="2005-07" db="EMBL/GenBank/DDBJ databases">
        <authorList>
            <person name="Mural R.J."/>
            <person name="Istrail S."/>
            <person name="Sutton G.G."/>
            <person name="Florea L."/>
            <person name="Halpern A.L."/>
            <person name="Mobarry C.M."/>
            <person name="Lippert R."/>
            <person name="Walenz B."/>
            <person name="Shatkay H."/>
            <person name="Dew I."/>
            <person name="Miller J.R."/>
            <person name="Flanigan M.J."/>
            <person name="Edwards N.J."/>
            <person name="Bolanos R."/>
            <person name="Fasulo D."/>
            <person name="Halldorsson B.V."/>
            <person name="Hannenhalli S."/>
            <person name="Turner R."/>
            <person name="Yooseph S."/>
            <person name="Lu F."/>
            <person name="Nusskern D.R."/>
            <person name="Shue B.C."/>
            <person name="Zheng X.H."/>
            <person name="Zhong F."/>
            <person name="Delcher A.L."/>
            <person name="Huson D.H."/>
            <person name="Kravitz S.A."/>
            <person name="Mouchard L."/>
            <person name="Reinert K."/>
            <person name="Remington K.A."/>
            <person name="Clark A.G."/>
            <person name="Waterman M.S."/>
            <person name="Eichler E.E."/>
            <person name="Adams M.D."/>
            <person name="Hunkapiller M.W."/>
            <person name="Myers E.W."/>
            <person name="Venter J.C."/>
        </authorList>
    </citation>
    <scope>NUCLEOTIDE SEQUENCE [LARGE SCALE GENOMIC DNA]</scope>
</reference>
<reference key="4">
    <citation type="journal article" date="2004" name="Genome Res.">
        <title>The status, quality, and expansion of the NIH full-length cDNA project: the Mammalian Gene Collection (MGC).</title>
        <authorList>
            <consortium name="The MGC Project Team"/>
        </authorList>
    </citation>
    <scope>NUCLEOTIDE SEQUENCE [LARGE SCALE MRNA] (ISOFORM 2)</scope>
    <source>
        <tissue>Placenta</tissue>
    </source>
</reference>
<reference key="5">
    <citation type="journal article" date="2014" name="J. Proteomics">
        <title>An enzyme assisted RP-RPLC approach for in-depth analysis of human liver phosphoproteome.</title>
        <authorList>
            <person name="Bian Y."/>
            <person name="Song C."/>
            <person name="Cheng K."/>
            <person name="Dong M."/>
            <person name="Wang F."/>
            <person name="Huang J."/>
            <person name="Sun D."/>
            <person name="Wang L."/>
            <person name="Ye M."/>
            <person name="Zou H."/>
        </authorList>
    </citation>
    <scope>PHOSPHORYLATION [LARGE SCALE ANALYSIS] AT SER-280</scope>
    <scope>IDENTIFICATION BY MASS SPECTROMETRY [LARGE SCALE ANALYSIS]</scope>
    <source>
        <tissue>Liver</tissue>
    </source>
</reference>
<reference key="6">
    <citation type="journal article" date="2018" name="Brain">
        <title>GDAP2 mutations implicate susceptibility to cellular stress in a new form of cerebellar ataxia.</title>
        <authorList>
            <person name="Eidhof I."/>
            <person name="Baets J."/>
            <person name="Kamsteeg E.J."/>
            <person name="Deconinck T."/>
            <person name="van Ninhuijs L."/>
            <person name="Martin J.J."/>
            <person name="Schuele R."/>
            <person name="Zuechner S."/>
            <person name="De Jonghe P."/>
            <person name="Schenck A."/>
            <person name="van de Warrenburg B.P."/>
        </authorList>
    </citation>
    <scope>INVOLVEMENT IN SCAR27</scope>
    <scope>VARIANT SCAR27 316-GLN--LEU-497 DEL</scope>
</reference>
<comment type="interaction">
    <interactant intactId="EBI-10316460">
        <id>Q9NXN4</id>
    </interactant>
    <interactant intactId="EBI-742887">
        <id>Q8TAP6</id>
        <label>CEP76</label>
    </interactant>
    <organismsDiffer>false</organismsDiffer>
    <experiments>3</experiments>
</comment>
<comment type="alternative products">
    <event type="alternative splicing"/>
    <isoform>
        <id>Q9NXN4-1</id>
        <name>1</name>
        <sequence type="displayed"/>
    </isoform>
    <isoform>
        <id>Q9NXN4-2</id>
        <name>2</name>
        <sequence type="described" ref="VSP_033186"/>
    </isoform>
</comment>
<comment type="disease" evidence="3">
    <disease id="DI-05515">
        <name>Spinocerebellar ataxia, autosomal recessive, 27</name>
        <acronym>SCAR27</acronym>
        <description>A form of spinocerebellar ataxia, a clinically and genetically heterogeneous group of cerebellar disorders due to degeneration of the cerebellum with variable involvement of the brainstem and spinal cord. SCAR27 is a progressive disease characterized by gait difficulties, eye movement abnormalities, dysarthria, and difficulty writing. Some patients may lose independent ambulation. Additional features include spasticity of the lower limbs and cognitive impairment.</description>
        <dbReference type="MIM" id="618369"/>
    </disease>
    <text>The disease is caused by variants affecting the gene represented in this entry.</text>
</comment>
<comment type="similarity">
    <text evidence="5">Belongs to the GDAP2 family.</text>
</comment>
<keyword id="KW-0002">3D-structure</keyword>
<keyword id="KW-0025">Alternative splicing</keyword>
<keyword id="KW-0225">Disease variant</keyword>
<keyword id="KW-0523">Neurodegeneration</keyword>
<keyword id="KW-0597">Phosphoprotein</keyword>
<keyword id="KW-1267">Proteomics identification</keyword>
<keyword id="KW-1185">Reference proteome</keyword>
<keyword id="KW-0950">Spinocerebellar ataxia</keyword>
<sequence>MDPLGAPSQFVDVDTLPSWGDSCQDELNSSDTTAEIFQEDTVRSPFLYNKDVNGKVVLWKGDVALLNCTAIVNTSNESLTDKNPVSESIFMLAGPDLKEDLQKLKGCRTGEAKLTKGFNLAARFIIHTVGPKYKSRYRTAAESSLYSCYRNVLQLAKEQSMSSVGFCVINSAKRGYPLEDATHIALRTVRRFLEIHGETIEKVVFAVSDLEEGTYQKLLPLYFPRSLKEENRSLPYLPADIGNAEGEPVVPERQIRISEKPGAPEDNQEEEDEGLGVDLSFIGSHAFARMEGDIDKQRKLILQGQLSEAALQKQHQRNYNRWLCQARSEDLSDIASLKALYQTGVDNCGRTVMVVVGRNIPVTLIDMDKALLYFIHVMDHIAVKEYVLVYFHTLTSEYNHLDSDFLKKLYDVVDVKYKRNLKAVYFVHPTFRSKVSTWFFTTFSVSGLKDKIHHVDSLHQLFSAISPEQIDFPPFVLEYDARENGPYYTSYPPSPDL</sequence>
<name>GDAP2_HUMAN</name>
<evidence type="ECO:0000255" key="1">
    <source>
        <dbReference type="PROSITE-ProRule" id="PRU00490"/>
    </source>
</evidence>
<evidence type="ECO:0000256" key="2">
    <source>
        <dbReference type="SAM" id="MobiDB-lite"/>
    </source>
</evidence>
<evidence type="ECO:0000269" key="3">
    <source>
    </source>
</evidence>
<evidence type="ECO:0000303" key="4">
    <source>
    </source>
</evidence>
<evidence type="ECO:0000305" key="5"/>
<evidence type="ECO:0007744" key="6">
    <source>
    </source>
</evidence>
<evidence type="ECO:0007829" key="7">
    <source>
        <dbReference type="PDB" id="4UML"/>
    </source>
</evidence>
<organism>
    <name type="scientific">Homo sapiens</name>
    <name type="common">Human</name>
    <dbReference type="NCBI Taxonomy" id="9606"/>
    <lineage>
        <taxon>Eukaryota</taxon>
        <taxon>Metazoa</taxon>
        <taxon>Chordata</taxon>
        <taxon>Craniata</taxon>
        <taxon>Vertebrata</taxon>
        <taxon>Euteleostomi</taxon>
        <taxon>Mammalia</taxon>
        <taxon>Eutheria</taxon>
        <taxon>Euarchontoglires</taxon>
        <taxon>Primates</taxon>
        <taxon>Haplorrhini</taxon>
        <taxon>Catarrhini</taxon>
        <taxon>Hominidae</taxon>
        <taxon>Homo</taxon>
    </lineage>
</organism>
<accession>Q9NXN4</accession>
<accession>Q96DZ0</accession>